<accession>B2K9W1</accession>
<protein>
    <recommendedName>
        <fullName evidence="1">Putative transport protein YPTS_1454</fullName>
    </recommendedName>
</protein>
<feature type="chain" id="PRO_1000135199" description="Putative transport protein YPTS_1454">
    <location>
        <begin position="1"/>
        <end position="562"/>
    </location>
</feature>
<feature type="transmembrane region" description="Helical" evidence="1">
    <location>
        <begin position="8"/>
        <end position="28"/>
    </location>
</feature>
<feature type="transmembrane region" description="Helical" evidence="1">
    <location>
        <begin position="37"/>
        <end position="57"/>
    </location>
</feature>
<feature type="transmembrane region" description="Helical" evidence="1">
    <location>
        <begin position="66"/>
        <end position="86"/>
    </location>
</feature>
<feature type="transmembrane region" description="Helical" evidence="1">
    <location>
        <begin position="94"/>
        <end position="114"/>
    </location>
</feature>
<feature type="transmembrane region" description="Helical" evidence="1">
    <location>
        <begin position="118"/>
        <end position="138"/>
    </location>
</feature>
<feature type="transmembrane region" description="Helical" evidence="1">
    <location>
        <begin position="158"/>
        <end position="178"/>
    </location>
</feature>
<feature type="transmembrane region" description="Helical" evidence="1">
    <location>
        <begin position="383"/>
        <end position="403"/>
    </location>
</feature>
<feature type="transmembrane region" description="Helical" evidence="1">
    <location>
        <begin position="406"/>
        <end position="426"/>
    </location>
</feature>
<feature type="transmembrane region" description="Helical" evidence="1">
    <location>
        <begin position="447"/>
        <end position="467"/>
    </location>
</feature>
<feature type="transmembrane region" description="Helical" evidence="1">
    <location>
        <begin position="475"/>
        <end position="495"/>
    </location>
</feature>
<feature type="transmembrane region" description="Helical" evidence="1">
    <location>
        <begin position="541"/>
        <end position="561"/>
    </location>
</feature>
<feature type="domain" description="RCK C-terminal 1" evidence="1">
    <location>
        <begin position="202"/>
        <end position="288"/>
    </location>
</feature>
<feature type="domain" description="RCK C-terminal 2" evidence="1">
    <location>
        <begin position="290"/>
        <end position="373"/>
    </location>
</feature>
<proteinExistence type="inferred from homology"/>
<gene>
    <name type="ordered locus">YPTS_1454</name>
</gene>
<name>Y1454_YERPB</name>
<dbReference type="EMBL" id="CP001048">
    <property type="protein sequence ID" value="ACC88426.1"/>
    <property type="molecule type" value="Genomic_DNA"/>
</dbReference>
<dbReference type="RefSeq" id="WP_002208766.1">
    <property type="nucleotide sequence ID" value="NZ_CP009780.1"/>
</dbReference>
<dbReference type="SMR" id="B2K9W1"/>
<dbReference type="KEGG" id="ypb:YPTS_1454"/>
<dbReference type="PATRIC" id="fig|502801.10.peg.813"/>
<dbReference type="GO" id="GO:0005886">
    <property type="term" value="C:plasma membrane"/>
    <property type="evidence" value="ECO:0007669"/>
    <property type="project" value="UniProtKB-SubCell"/>
</dbReference>
<dbReference type="GO" id="GO:0008324">
    <property type="term" value="F:monoatomic cation transmembrane transporter activity"/>
    <property type="evidence" value="ECO:0007669"/>
    <property type="project" value="InterPro"/>
</dbReference>
<dbReference type="GO" id="GO:0006813">
    <property type="term" value="P:potassium ion transport"/>
    <property type="evidence" value="ECO:0007669"/>
    <property type="project" value="InterPro"/>
</dbReference>
<dbReference type="FunFam" id="3.30.70.1450:FF:000003">
    <property type="entry name" value="Putative transport protein YbjL"/>
    <property type="match status" value="1"/>
</dbReference>
<dbReference type="Gene3D" id="3.30.70.1450">
    <property type="entry name" value="Regulator of K+ conductance, C-terminal domain"/>
    <property type="match status" value="2"/>
</dbReference>
<dbReference type="HAMAP" id="MF_01015">
    <property type="entry name" value="YbjL"/>
    <property type="match status" value="1"/>
</dbReference>
<dbReference type="InterPro" id="IPR050144">
    <property type="entry name" value="AAE_transporter"/>
</dbReference>
<dbReference type="InterPro" id="IPR006037">
    <property type="entry name" value="RCK_C"/>
</dbReference>
<dbReference type="InterPro" id="IPR036721">
    <property type="entry name" value="RCK_C_sf"/>
</dbReference>
<dbReference type="InterPro" id="IPR023017">
    <property type="entry name" value="Transp_YbjL_put"/>
</dbReference>
<dbReference type="InterPro" id="IPR006512">
    <property type="entry name" value="YidE_YbjL"/>
</dbReference>
<dbReference type="NCBIfam" id="NF003440">
    <property type="entry name" value="PRK04972.1"/>
    <property type="match status" value="1"/>
</dbReference>
<dbReference type="NCBIfam" id="TIGR01625">
    <property type="entry name" value="YidE_YbjL_dupl"/>
    <property type="match status" value="2"/>
</dbReference>
<dbReference type="PANTHER" id="PTHR30445">
    <property type="entry name" value="K(+)_H(+) ANTIPORTER SUBUNIT KHTT"/>
    <property type="match status" value="1"/>
</dbReference>
<dbReference type="PANTHER" id="PTHR30445:SF10">
    <property type="entry name" value="TRANSPORT PROTEIN YBJL-RELATED"/>
    <property type="match status" value="1"/>
</dbReference>
<dbReference type="Pfam" id="PF06826">
    <property type="entry name" value="Asp-Al_Ex"/>
    <property type="match status" value="2"/>
</dbReference>
<dbReference type="Pfam" id="PF02080">
    <property type="entry name" value="TrkA_C"/>
    <property type="match status" value="2"/>
</dbReference>
<dbReference type="SUPFAM" id="SSF116726">
    <property type="entry name" value="TrkA C-terminal domain-like"/>
    <property type="match status" value="2"/>
</dbReference>
<dbReference type="PROSITE" id="PS51202">
    <property type="entry name" value="RCK_C"/>
    <property type="match status" value="2"/>
</dbReference>
<organism>
    <name type="scientific">Yersinia pseudotuberculosis serotype IB (strain PB1/+)</name>
    <dbReference type="NCBI Taxonomy" id="502801"/>
    <lineage>
        <taxon>Bacteria</taxon>
        <taxon>Pseudomonadati</taxon>
        <taxon>Pseudomonadota</taxon>
        <taxon>Gammaproteobacteria</taxon>
        <taxon>Enterobacterales</taxon>
        <taxon>Yersiniaceae</taxon>
        <taxon>Yersinia</taxon>
    </lineage>
</organism>
<sequence length="562" mass="60230">MNINVANLLNGNYILLLFVVLALGLCLGKLRLGSIQLGNAIGVLVVSLLLGQQHFAINTEALNLGFMLFIFCVGVEAGPNFFSIFFRDGKNYLMLALVMVGSAMILALGLGKLFGWDIGLTAGMLAGSMTSTPVLVGAGDTLRHTMANGSSLQQAQDNLSLGYALTYLIGLVSLILGARYLPKLQHQDLPTSAQQIARERGLDTDSQRKVYLPVIRAYRVGPELVAWADGKNLRELGIYRQTGCYIERIRRNGILANPDGDAVLQVGDEISLVGYPDAHSRLDPSFRNGKEVFDRDLLDMRIVTEEIVVKNSNAVGKRLSHLKLTDHGCFLNRVIRSQIEMPIDDNVVLNKGDVLQVSGDARRVKSVAEKIGFISIHSQVTDLLAFCSFFILGLMIGLITFQFSNFSFGIGNAAGLLLAGIMLGFLRANHPTFGYIPQGALNMVKEFGLMVFMAGVGLSAGGGINSSLGAVGGQMLISGLIVSLVPVVICFVFGAYVLRMNRALLFGAIMGARTCAPAMDIISDTARSNIPALGYAGTYAIANVLLTLAGSLIVILWPGILG</sequence>
<comment type="subcellular location">
    <subcellularLocation>
        <location evidence="1">Cell membrane</location>
        <topology evidence="1">Multi-pass membrane protein</topology>
    </subcellularLocation>
</comment>
<comment type="similarity">
    <text evidence="1">Belongs to the AAE transporter (TC 2.A.81) family. YbjL subfamily.</text>
</comment>
<evidence type="ECO:0000255" key="1">
    <source>
        <dbReference type="HAMAP-Rule" id="MF_01015"/>
    </source>
</evidence>
<reference key="1">
    <citation type="submission" date="2008-04" db="EMBL/GenBank/DDBJ databases">
        <title>Complete sequence of Yersinia pseudotuberculosis PB1/+.</title>
        <authorList>
            <person name="Copeland A."/>
            <person name="Lucas S."/>
            <person name="Lapidus A."/>
            <person name="Glavina del Rio T."/>
            <person name="Dalin E."/>
            <person name="Tice H."/>
            <person name="Bruce D."/>
            <person name="Goodwin L."/>
            <person name="Pitluck S."/>
            <person name="Munk A.C."/>
            <person name="Brettin T."/>
            <person name="Detter J.C."/>
            <person name="Han C."/>
            <person name="Tapia R."/>
            <person name="Schmutz J."/>
            <person name="Larimer F."/>
            <person name="Land M."/>
            <person name="Hauser L."/>
            <person name="Challacombe J.F."/>
            <person name="Green L."/>
            <person name="Lindler L.E."/>
            <person name="Nikolich M.P."/>
            <person name="Richardson P."/>
        </authorList>
    </citation>
    <scope>NUCLEOTIDE SEQUENCE [LARGE SCALE GENOMIC DNA]</scope>
    <source>
        <strain>PB1/+</strain>
    </source>
</reference>
<keyword id="KW-1003">Cell membrane</keyword>
<keyword id="KW-0472">Membrane</keyword>
<keyword id="KW-0677">Repeat</keyword>
<keyword id="KW-0812">Transmembrane</keyword>
<keyword id="KW-1133">Transmembrane helix</keyword>
<keyword id="KW-0813">Transport</keyword>